<dbReference type="EC" id="7.6.2.-" evidence="1"/>
<dbReference type="EMBL" id="AE005174">
    <property type="protein sequence ID" value="AAG58329.1"/>
    <property type="molecule type" value="Genomic_DNA"/>
</dbReference>
<dbReference type="EMBL" id="BA000007">
    <property type="protein sequence ID" value="BAB37497.1"/>
    <property type="molecule type" value="Genomic_DNA"/>
</dbReference>
<dbReference type="PIR" id="B91138">
    <property type="entry name" value="B91138"/>
</dbReference>
<dbReference type="PIR" id="E85983">
    <property type="entry name" value="E85983"/>
</dbReference>
<dbReference type="RefSeq" id="NP_312101.1">
    <property type="nucleotide sequence ID" value="NC_002695.1"/>
</dbReference>
<dbReference type="RefSeq" id="WP_000438245.1">
    <property type="nucleotide sequence ID" value="NZ_VOAI01000014.1"/>
</dbReference>
<dbReference type="SMR" id="P63388"/>
<dbReference type="STRING" id="155864.Z4558"/>
<dbReference type="GeneID" id="916083"/>
<dbReference type="GeneID" id="93778786"/>
<dbReference type="KEGG" id="ece:Z4558"/>
<dbReference type="KEGG" id="ecs:ECs_4074"/>
<dbReference type="PATRIC" id="fig|386585.9.peg.4253"/>
<dbReference type="eggNOG" id="COG1127">
    <property type="taxonomic scope" value="Bacteria"/>
</dbReference>
<dbReference type="HOGENOM" id="CLU_000604_1_22_6"/>
<dbReference type="OMA" id="MIMYDEP"/>
<dbReference type="Proteomes" id="UP000000558">
    <property type="component" value="Chromosome"/>
</dbReference>
<dbReference type="Proteomes" id="UP000002519">
    <property type="component" value="Chromosome"/>
</dbReference>
<dbReference type="GO" id="GO:0005886">
    <property type="term" value="C:plasma membrane"/>
    <property type="evidence" value="ECO:0007669"/>
    <property type="project" value="UniProtKB-SubCell"/>
</dbReference>
<dbReference type="GO" id="GO:0005524">
    <property type="term" value="F:ATP binding"/>
    <property type="evidence" value="ECO:0007669"/>
    <property type="project" value="UniProtKB-KW"/>
</dbReference>
<dbReference type="GO" id="GO:0016887">
    <property type="term" value="F:ATP hydrolysis activity"/>
    <property type="evidence" value="ECO:0007669"/>
    <property type="project" value="InterPro"/>
</dbReference>
<dbReference type="CDD" id="cd03261">
    <property type="entry name" value="ABC_Org_Solvent_Resistant"/>
    <property type="match status" value="1"/>
</dbReference>
<dbReference type="FunFam" id="3.40.50.300:FF:000192">
    <property type="entry name" value="Phospholipid ABC transporter ATP-binding protein MlaF"/>
    <property type="match status" value="1"/>
</dbReference>
<dbReference type="Gene3D" id="3.40.50.300">
    <property type="entry name" value="P-loop containing nucleotide triphosphate hydrolases"/>
    <property type="match status" value="1"/>
</dbReference>
<dbReference type="InterPro" id="IPR003593">
    <property type="entry name" value="AAA+_ATPase"/>
</dbReference>
<dbReference type="InterPro" id="IPR003439">
    <property type="entry name" value="ABC_transporter-like_ATP-bd"/>
</dbReference>
<dbReference type="InterPro" id="IPR017871">
    <property type="entry name" value="ABC_transporter-like_CS"/>
</dbReference>
<dbReference type="InterPro" id="IPR027417">
    <property type="entry name" value="P-loop_NTPase"/>
</dbReference>
<dbReference type="NCBIfam" id="NF008809">
    <property type="entry name" value="PRK11831.1"/>
    <property type="match status" value="1"/>
</dbReference>
<dbReference type="PANTHER" id="PTHR43023:SF6">
    <property type="entry name" value="INTERMEMBRANE PHOSPHOLIPID TRANSPORT SYSTEM ATP-BINDING PROTEIN MLAF"/>
    <property type="match status" value="1"/>
</dbReference>
<dbReference type="PANTHER" id="PTHR43023">
    <property type="entry name" value="PROTEIN TRIGALACTOSYLDIACYLGLYCEROL 3, CHLOROPLASTIC"/>
    <property type="match status" value="1"/>
</dbReference>
<dbReference type="Pfam" id="PF00005">
    <property type="entry name" value="ABC_tran"/>
    <property type="match status" value="1"/>
</dbReference>
<dbReference type="SMART" id="SM00382">
    <property type="entry name" value="AAA"/>
    <property type="match status" value="1"/>
</dbReference>
<dbReference type="SUPFAM" id="SSF52540">
    <property type="entry name" value="P-loop containing nucleoside triphosphate hydrolases"/>
    <property type="match status" value="1"/>
</dbReference>
<dbReference type="PROSITE" id="PS00211">
    <property type="entry name" value="ABC_TRANSPORTER_1"/>
    <property type="match status" value="1"/>
</dbReference>
<dbReference type="PROSITE" id="PS50893">
    <property type="entry name" value="ABC_TRANSPORTER_2"/>
    <property type="match status" value="1"/>
</dbReference>
<evidence type="ECO:0000250" key="1">
    <source>
        <dbReference type="UniProtKB" id="P63386"/>
    </source>
</evidence>
<evidence type="ECO:0000255" key="2">
    <source>
        <dbReference type="PROSITE-ProRule" id="PRU00434"/>
    </source>
</evidence>
<evidence type="ECO:0000305" key="3"/>
<organism>
    <name type="scientific">Escherichia coli O157:H7</name>
    <dbReference type="NCBI Taxonomy" id="83334"/>
    <lineage>
        <taxon>Bacteria</taxon>
        <taxon>Pseudomonadati</taxon>
        <taxon>Pseudomonadota</taxon>
        <taxon>Gammaproteobacteria</taxon>
        <taxon>Enterobacterales</taxon>
        <taxon>Enterobacteriaceae</taxon>
        <taxon>Escherichia</taxon>
    </lineage>
</organism>
<sequence>MEQSVANLVDMRDVSFTRGNRCIFDNISLTVPRGKITAIMGPSGIGKTTLLRLIGGQIAPDHGEILFDGENIPAMSRSRLYTVRKRMSMLFQSGALFTDMNVFDNVAYPLREHTQLPAPLLHSTVMMKLEAVGLRGAAKLMPSELSGGMARRAALARAIALEPDLIMFDEPFVGQDPITMGVLVKLISELNSALGVTCVVVSHDVPEVLSIADHAWILADKKIVAHGSAQALQANPDPRVRQFLDGIADGPVPFRYPAGDYHADLLPGS</sequence>
<keyword id="KW-0067">ATP-binding</keyword>
<keyword id="KW-0997">Cell inner membrane</keyword>
<keyword id="KW-1003">Cell membrane</keyword>
<keyword id="KW-0472">Membrane</keyword>
<keyword id="KW-0547">Nucleotide-binding</keyword>
<keyword id="KW-1185">Reference proteome</keyword>
<keyword id="KW-1278">Translocase</keyword>
<keyword id="KW-0813">Transport</keyword>
<comment type="function">
    <text evidence="1">Part of the ABC transporter complex MlaFEDB, which is involved in a phospholipid transport pathway that maintains lipid asymmetry in the outer membrane by retrograde trafficking of phospholipids from the outer membrane to the inner membrane. Responsible for energy coupling to the transport system.</text>
</comment>
<comment type="subunit">
    <text evidence="1">The complex is composed of two ATP-binding proteins (MlaF), two transmembrane proteins (MlaE), two cytoplasmic solute-binding proteins (MlaB) and six periplasmic solute-binding proteins (MlaD).</text>
</comment>
<comment type="subcellular location">
    <subcellularLocation>
        <location evidence="1">Cell inner membrane</location>
        <topology evidence="1">Peripheral membrane protein</topology>
        <orientation evidence="1">Cytoplasmic side</orientation>
    </subcellularLocation>
</comment>
<comment type="similarity">
    <text evidence="3">Belongs to the ABC transporter superfamily. MlaF family.</text>
</comment>
<proteinExistence type="inferred from homology"/>
<feature type="chain" id="PRO_0000093173" description="Intermembrane phospholipid transport system ATP-binding protein MlaF">
    <location>
        <begin position="1"/>
        <end position="269"/>
    </location>
</feature>
<feature type="domain" description="ABC transporter" evidence="2">
    <location>
        <begin position="9"/>
        <end position="245"/>
    </location>
</feature>
<feature type="binding site" evidence="2">
    <location>
        <begin position="41"/>
        <end position="48"/>
    </location>
    <ligand>
        <name>ATP</name>
        <dbReference type="ChEBI" id="CHEBI:30616"/>
    </ligand>
</feature>
<gene>
    <name evidence="1" type="primary">mlaF</name>
    <name type="ordered locus">Z4558</name>
    <name type="ordered locus">ECs4074</name>
</gene>
<accession>P63388</accession>
<accession>P45393</accession>
<reference key="1">
    <citation type="journal article" date="2001" name="Nature">
        <title>Genome sequence of enterohaemorrhagic Escherichia coli O157:H7.</title>
        <authorList>
            <person name="Perna N.T."/>
            <person name="Plunkett G. III"/>
            <person name="Burland V."/>
            <person name="Mau B."/>
            <person name="Glasner J.D."/>
            <person name="Rose D.J."/>
            <person name="Mayhew G.F."/>
            <person name="Evans P.S."/>
            <person name="Gregor J."/>
            <person name="Kirkpatrick H.A."/>
            <person name="Posfai G."/>
            <person name="Hackett J."/>
            <person name="Klink S."/>
            <person name="Boutin A."/>
            <person name="Shao Y."/>
            <person name="Miller L."/>
            <person name="Grotbeck E.J."/>
            <person name="Davis N.W."/>
            <person name="Lim A."/>
            <person name="Dimalanta E.T."/>
            <person name="Potamousis K."/>
            <person name="Apodaca J."/>
            <person name="Anantharaman T.S."/>
            <person name="Lin J."/>
            <person name="Yen G."/>
            <person name="Schwartz D.C."/>
            <person name="Welch R.A."/>
            <person name="Blattner F.R."/>
        </authorList>
    </citation>
    <scope>NUCLEOTIDE SEQUENCE [LARGE SCALE GENOMIC DNA]</scope>
    <source>
        <strain>O157:H7 / EDL933 / ATCC 700927 / EHEC</strain>
    </source>
</reference>
<reference key="2">
    <citation type="journal article" date="2001" name="DNA Res.">
        <title>Complete genome sequence of enterohemorrhagic Escherichia coli O157:H7 and genomic comparison with a laboratory strain K-12.</title>
        <authorList>
            <person name="Hayashi T."/>
            <person name="Makino K."/>
            <person name="Ohnishi M."/>
            <person name="Kurokawa K."/>
            <person name="Ishii K."/>
            <person name="Yokoyama K."/>
            <person name="Han C.-G."/>
            <person name="Ohtsubo E."/>
            <person name="Nakayama K."/>
            <person name="Murata T."/>
            <person name="Tanaka M."/>
            <person name="Tobe T."/>
            <person name="Iida T."/>
            <person name="Takami H."/>
            <person name="Honda T."/>
            <person name="Sasakawa C."/>
            <person name="Ogasawara N."/>
            <person name="Yasunaga T."/>
            <person name="Kuhara S."/>
            <person name="Shiba T."/>
            <person name="Hattori M."/>
            <person name="Shinagawa H."/>
        </authorList>
    </citation>
    <scope>NUCLEOTIDE SEQUENCE [LARGE SCALE GENOMIC DNA]</scope>
    <source>
        <strain>O157:H7 / Sakai / RIMD 0509952 / EHEC</strain>
    </source>
</reference>
<protein>
    <recommendedName>
        <fullName evidence="1">Intermembrane phospholipid transport system ATP-binding protein MlaF</fullName>
        <ecNumber evidence="1">7.6.2.-</ecNumber>
    </recommendedName>
</protein>
<name>MLAF_ECO57</name>